<name>CALM_EUPCH</name>
<sequence>MADQLTDDQISEFKEAFSLFDKDGDGCITTKELGTVMRSLGQNPTEAELQDMINEVDADGNGTIDFPEFLNLMARKMKDTDSEEELKEAFRVFDKDQNGFISAAELRHVMTNLGEKLTDEEVDEMIREADVDGDGQINYEEFVKVMMAK</sequence>
<comment type="function">
    <text>Calmodulin mediates the control of a large number of enzymes, ion channels and other proteins by Ca(2+). Among the enzymes to be stimulated by the calmodulin-Ca(2+) complex are a number of protein kinases and phosphatases.</text>
</comment>
<comment type="miscellaneous">
    <text>This protein has four functional calcium-binding sites.</text>
</comment>
<comment type="similarity">
    <text evidence="3">Belongs to the calmodulin family.</text>
</comment>
<organism>
    <name type="scientific">Euphorbia characias</name>
    <name type="common">Albanian spurge</name>
    <dbReference type="NCBI Taxonomy" id="3991"/>
    <lineage>
        <taxon>Eukaryota</taxon>
        <taxon>Viridiplantae</taxon>
        <taxon>Streptophyta</taxon>
        <taxon>Embryophyta</taxon>
        <taxon>Tracheophyta</taxon>
        <taxon>Spermatophyta</taxon>
        <taxon>Magnoliopsida</taxon>
        <taxon>eudicotyledons</taxon>
        <taxon>Gunneridae</taxon>
        <taxon>Pentapetalae</taxon>
        <taxon>rosids</taxon>
        <taxon>fabids</taxon>
        <taxon>Malpighiales</taxon>
        <taxon>Euphorbiaceae</taxon>
        <taxon>Euphorbioideae</taxon>
        <taxon>Euphorbieae</taxon>
        <taxon>Euphorbia</taxon>
        <taxon>Euphorbia subgen. Esula</taxon>
        <taxon>Euphorbia sect. Patellares</taxon>
    </lineage>
</organism>
<dbReference type="EMBL" id="AY297816">
    <property type="protein sequence ID" value="AAP55717.2"/>
    <property type="molecule type" value="mRNA"/>
</dbReference>
<dbReference type="SMR" id="Q7Y052"/>
<dbReference type="GO" id="GO:0016460">
    <property type="term" value="C:myosin II complex"/>
    <property type="evidence" value="ECO:0007669"/>
    <property type="project" value="TreeGrafter"/>
</dbReference>
<dbReference type="GO" id="GO:0005509">
    <property type="term" value="F:calcium ion binding"/>
    <property type="evidence" value="ECO:0007669"/>
    <property type="project" value="InterPro"/>
</dbReference>
<dbReference type="CDD" id="cd00051">
    <property type="entry name" value="EFh"/>
    <property type="match status" value="2"/>
</dbReference>
<dbReference type="FunFam" id="1.10.238.10:FF:000034">
    <property type="entry name" value="Calmodulin"/>
    <property type="match status" value="1"/>
</dbReference>
<dbReference type="FunFam" id="1.10.238.10:FF:000042">
    <property type="entry name" value="Calmodulin"/>
    <property type="match status" value="1"/>
</dbReference>
<dbReference type="Gene3D" id="1.10.238.10">
    <property type="entry name" value="EF-hand"/>
    <property type="match status" value="3"/>
</dbReference>
<dbReference type="InterPro" id="IPR050230">
    <property type="entry name" value="CALM/Myosin/TropC-like"/>
</dbReference>
<dbReference type="InterPro" id="IPR011992">
    <property type="entry name" value="EF-hand-dom_pair"/>
</dbReference>
<dbReference type="InterPro" id="IPR018247">
    <property type="entry name" value="EF_Hand_1_Ca_BS"/>
</dbReference>
<dbReference type="InterPro" id="IPR002048">
    <property type="entry name" value="EF_hand_dom"/>
</dbReference>
<dbReference type="PANTHER" id="PTHR23048:SF53">
    <property type="entry name" value="CALMODULIN"/>
    <property type="match status" value="1"/>
</dbReference>
<dbReference type="PANTHER" id="PTHR23048">
    <property type="entry name" value="MYOSIN LIGHT CHAIN 1, 3"/>
    <property type="match status" value="1"/>
</dbReference>
<dbReference type="Pfam" id="PF13499">
    <property type="entry name" value="EF-hand_7"/>
    <property type="match status" value="2"/>
</dbReference>
<dbReference type="SMART" id="SM00054">
    <property type="entry name" value="EFh"/>
    <property type="match status" value="4"/>
</dbReference>
<dbReference type="SUPFAM" id="SSF47473">
    <property type="entry name" value="EF-hand"/>
    <property type="match status" value="1"/>
</dbReference>
<dbReference type="PROSITE" id="PS00018">
    <property type="entry name" value="EF_HAND_1"/>
    <property type="match status" value="4"/>
</dbReference>
<dbReference type="PROSITE" id="PS50222">
    <property type="entry name" value="EF_HAND_2"/>
    <property type="match status" value="4"/>
</dbReference>
<feature type="initiator methionine" description="Removed" evidence="1">
    <location>
        <position position="1"/>
    </location>
</feature>
<feature type="chain" id="PRO_0000198288" description="Calmodulin">
    <location>
        <begin position="2"/>
        <end position="149"/>
    </location>
</feature>
<feature type="domain" description="EF-hand 1" evidence="2">
    <location>
        <begin position="8"/>
        <end position="43"/>
    </location>
</feature>
<feature type="domain" description="EF-hand 2" evidence="2">
    <location>
        <begin position="44"/>
        <end position="79"/>
    </location>
</feature>
<feature type="domain" description="EF-hand 3" evidence="2">
    <location>
        <begin position="81"/>
        <end position="116"/>
    </location>
</feature>
<feature type="domain" description="EF-hand 4" evidence="2">
    <location>
        <begin position="117"/>
        <end position="149"/>
    </location>
</feature>
<feature type="binding site" evidence="2">
    <location>
        <position position="21"/>
    </location>
    <ligand>
        <name>Ca(2+)</name>
        <dbReference type="ChEBI" id="CHEBI:29108"/>
        <label>1</label>
    </ligand>
</feature>
<feature type="binding site" evidence="2">
    <location>
        <position position="23"/>
    </location>
    <ligand>
        <name>Ca(2+)</name>
        <dbReference type="ChEBI" id="CHEBI:29108"/>
        <label>1</label>
    </ligand>
</feature>
<feature type="binding site" evidence="2">
    <location>
        <position position="25"/>
    </location>
    <ligand>
        <name>Ca(2+)</name>
        <dbReference type="ChEBI" id="CHEBI:29108"/>
        <label>1</label>
    </ligand>
</feature>
<feature type="binding site" evidence="2">
    <location>
        <position position="27"/>
    </location>
    <ligand>
        <name>Ca(2+)</name>
        <dbReference type="ChEBI" id="CHEBI:29108"/>
        <label>1</label>
    </ligand>
</feature>
<feature type="binding site" evidence="2">
    <location>
        <position position="32"/>
    </location>
    <ligand>
        <name>Ca(2+)</name>
        <dbReference type="ChEBI" id="CHEBI:29108"/>
        <label>1</label>
    </ligand>
</feature>
<feature type="binding site" evidence="2">
    <location>
        <position position="57"/>
    </location>
    <ligand>
        <name>Ca(2+)</name>
        <dbReference type="ChEBI" id="CHEBI:29108"/>
        <label>2</label>
    </ligand>
</feature>
<feature type="binding site" evidence="2">
    <location>
        <position position="59"/>
    </location>
    <ligand>
        <name>Ca(2+)</name>
        <dbReference type="ChEBI" id="CHEBI:29108"/>
        <label>2</label>
    </ligand>
</feature>
<feature type="binding site" evidence="2">
    <location>
        <position position="61"/>
    </location>
    <ligand>
        <name>Ca(2+)</name>
        <dbReference type="ChEBI" id="CHEBI:29108"/>
        <label>2</label>
    </ligand>
</feature>
<feature type="binding site" evidence="2">
    <location>
        <position position="63"/>
    </location>
    <ligand>
        <name>Ca(2+)</name>
        <dbReference type="ChEBI" id="CHEBI:29108"/>
        <label>2</label>
    </ligand>
</feature>
<feature type="binding site" evidence="2">
    <location>
        <position position="68"/>
    </location>
    <ligand>
        <name>Ca(2+)</name>
        <dbReference type="ChEBI" id="CHEBI:29108"/>
        <label>2</label>
    </ligand>
</feature>
<feature type="binding site" evidence="2">
    <location>
        <position position="94"/>
    </location>
    <ligand>
        <name>Ca(2+)</name>
        <dbReference type="ChEBI" id="CHEBI:29108"/>
        <label>3</label>
    </ligand>
</feature>
<feature type="binding site" evidence="2">
    <location>
        <position position="96"/>
    </location>
    <ligand>
        <name>Ca(2+)</name>
        <dbReference type="ChEBI" id="CHEBI:29108"/>
        <label>3</label>
    </ligand>
</feature>
<feature type="binding site" evidence="2">
    <location>
        <position position="98"/>
    </location>
    <ligand>
        <name>Ca(2+)</name>
        <dbReference type="ChEBI" id="CHEBI:29108"/>
        <label>3</label>
    </ligand>
</feature>
<feature type="binding site" evidence="2">
    <location>
        <position position="105"/>
    </location>
    <ligand>
        <name>Ca(2+)</name>
        <dbReference type="ChEBI" id="CHEBI:29108"/>
        <label>3</label>
    </ligand>
</feature>
<feature type="binding site" evidence="2">
    <location>
        <position position="130"/>
    </location>
    <ligand>
        <name>Ca(2+)</name>
        <dbReference type="ChEBI" id="CHEBI:29108"/>
        <label>4</label>
    </ligand>
</feature>
<feature type="binding site" evidence="2">
    <location>
        <position position="132"/>
    </location>
    <ligand>
        <name>Ca(2+)</name>
        <dbReference type="ChEBI" id="CHEBI:29108"/>
        <label>4</label>
    </ligand>
</feature>
<feature type="binding site" evidence="2">
    <location>
        <position position="134"/>
    </location>
    <ligand>
        <name>Ca(2+)</name>
        <dbReference type="ChEBI" id="CHEBI:29108"/>
        <label>4</label>
    </ligand>
</feature>
<feature type="binding site" evidence="2">
    <location>
        <position position="136"/>
    </location>
    <ligand>
        <name>Ca(2+)</name>
        <dbReference type="ChEBI" id="CHEBI:29108"/>
        <label>4</label>
    </ligand>
</feature>
<feature type="binding site" evidence="2">
    <location>
        <position position="141"/>
    </location>
    <ligand>
        <name>Ca(2+)</name>
        <dbReference type="ChEBI" id="CHEBI:29108"/>
        <label>4</label>
    </ligand>
</feature>
<feature type="modified residue" description="N-acetylalanine" evidence="1">
    <location>
        <position position="2"/>
    </location>
</feature>
<feature type="modified residue" description="N6,N6,N6-trimethyllysine" evidence="1">
    <location>
        <position position="116"/>
    </location>
</feature>
<proteinExistence type="evidence at transcript level"/>
<keyword id="KW-0007">Acetylation</keyword>
<keyword id="KW-0106">Calcium</keyword>
<keyword id="KW-0479">Metal-binding</keyword>
<keyword id="KW-0488">Methylation</keyword>
<keyword id="KW-0677">Repeat</keyword>
<protein>
    <recommendedName>
        <fullName>Calmodulin</fullName>
        <shortName>CaM</shortName>
    </recommendedName>
</protein>
<reference key="1">
    <citation type="submission" date="2003-12" db="EMBL/GenBank/DDBJ databases">
        <authorList>
            <person name="Longu S."/>
            <person name="Mura A."/>
            <person name="Travaglione A."/>
            <person name="Maccioni P."/>
            <person name="Medda R."/>
            <person name="Floris G."/>
            <person name="Padiglia A."/>
        </authorList>
    </citation>
    <scope>NUCLEOTIDE SEQUENCE [MRNA]</scope>
    <source>
        <tissue>Leaf</tissue>
    </source>
</reference>
<accession>Q7Y052</accession>
<evidence type="ECO:0000250" key="1"/>
<evidence type="ECO:0000255" key="2">
    <source>
        <dbReference type="PROSITE-ProRule" id="PRU00448"/>
    </source>
</evidence>
<evidence type="ECO:0000305" key="3"/>